<gene>
    <name evidence="1" type="primary">panB</name>
    <name type="ordered locus">PAE3410</name>
</gene>
<feature type="chain" id="PRO_0000184918" description="3-methyl-2-oxobutanoate hydroxymethyltransferase">
    <location>
        <begin position="1"/>
        <end position="262"/>
    </location>
</feature>
<feature type="active site" description="Proton acceptor" evidence="1">
    <location>
        <position position="180"/>
    </location>
</feature>
<feature type="binding site" evidence="1">
    <location>
        <begin position="43"/>
        <end position="44"/>
    </location>
    <ligand>
        <name>3-methyl-2-oxobutanoate</name>
        <dbReference type="ChEBI" id="CHEBI:11851"/>
    </ligand>
</feature>
<feature type="binding site" evidence="1">
    <location>
        <position position="43"/>
    </location>
    <ligand>
        <name>Mg(2+)</name>
        <dbReference type="ChEBI" id="CHEBI:18420"/>
    </ligand>
</feature>
<feature type="binding site" evidence="1">
    <location>
        <position position="82"/>
    </location>
    <ligand>
        <name>3-methyl-2-oxobutanoate</name>
        <dbReference type="ChEBI" id="CHEBI:11851"/>
    </ligand>
</feature>
<feature type="binding site" evidence="1">
    <location>
        <position position="82"/>
    </location>
    <ligand>
        <name>Mg(2+)</name>
        <dbReference type="ChEBI" id="CHEBI:18420"/>
    </ligand>
</feature>
<feature type="binding site" evidence="1">
    <location>
        <position position="111"/>
    </location>
    <ligand>
        <name>3-methyl-2-oxobutanoate</name>
        <dbReference type="ChEBI" id="CHEBI:11851"/>
    </ligand>
</feature>
<feature type="binding site" evidence="1">
    <location>
        <position position="113"/>
    </location>
    <ligand>
        <name>Mg(2+)</name>
        <dbReference type="ChEBI" id="CHEBI:18420"/>
    </ligand>
</feature>
<proteinExistence type="inferred from homology"/>
<organism>
    <name type="scientific">Pyrobaculum aerophilum (strain ATCC 51768 / DSM 7523 / JCM 9630 / CIP 104966 / NBRC 100827 / IM2)</name>
    <dbReference type="NCBI Taxonomy" id="178306"/>
    <lineage>
        <taxon>Archaea</taxon>
        <taxon>Thermoproteota</taxon>
        <taxon>Thermoprotei</taxon>
        <taxon>Thermoproteales</taxon>
        <taxon>Thermoproteaceae</taxon>
        <taxon>Pyrobaculum</taxon>
    </lineage>
</organism>
<evidence type="ECO:0000255" key="1">
    <source>
        <dbReference type="HAMAP-Rule" id="MF_00156"/>
    </source>
</evidence>
<name>PANB_PYRAE</name>
<protein>
    <recommendedName>
        <fullName evidence="1">3-methyl-2-oxobutanoate hydroxymethyltransferase</fullName>
        <ecNumber evidence="1">2.1.2.11</ecNumber>
    </recommendedName>
    <alternativeName>
        <fullName evidence="1">Ketopantoate hydroxymethyltransferase</fullName>
        <shortName evidence="1">KPHMT</shortName>
    </alternativeName>
</protein>
<dbReference type="EC" id="2.1.2.11" evidence="1"/>
<dbReference type="EMBL" id="AE009441">
    <property type="protein sequence ID" value="AAL64894.1"/>
    <property type="molecule type" value="Genomic_DNA"/>
</dbReference>
<dbReference type="RefSeq" id="WP_011009361.1">
    <property type="nucleotide sequence ID" value="NC_003364.1"/>
</dbReference>
<dbReference type="SMR" id="Q8ZT69"/>
<dbReference type="FunCoup" id="Q8ZT69">
    <property type="interactions" value="90"/>
</dbReference>
<dbReference type="STRING" id="178306.PAE3410"/>
<dbReference type="EnsemblBacteria" id="AAL64894">
    <property type="protein sequence ID" value="AAL64894"/>
    <property type="gene ID" value="PAE3410"/>
</dbReference>
<dbReference type="GeneID" id="1464089"/>
<dbReference type="KEGG" id="pai:PAE3410"/>
<dbReference type="PATRIC" id="fig|178306.9.peg.2563"/>
<dbReference type="eggNOG" id="arCOG00584">
    <property type="taxonomic scope" value="Archaea"/>
</dbReference>
<dbReference type="HOGENOM" id="CLU_036645_1_0_2"/>
<dbReference type="InParanoid" id="Q8ZT69"/>
<dbReference type="UniPathway" id="UPA00241"/>
<dbReference type="Proteomes" id="UP000002439">
    <property type="component" value="Chromosome"/>
</dbReference>
<dbReference type="GO" id="GO:0005737">
    <property type="term" value="C:cytoplasm"/>
    <property type="evidence" value="ECO:0007669"/>
    <property type="project" value="UniProtKB-SubCell"/>
</dbReference>
<dbReference type="GO" id="GO:0003864">
    <property type="term" value="F:3-methyl-2-oxobutanoate hydroxymethyltransferase activity"/>
    <property type="evidence" value="ECO:0000318"/>
    <property type="project" value="GO_Central"/>
</dbReference>
<dbReference type="GO" id="GO:0000287">
    <property type="term" value="F:magnesium ion binding"/>
    <property type="evidence" value="ECO:0000318"/>
    <property type="project" value="GO_Central"/>
</dbReference>
<dbReference type="GO" id="GO:0015937">
    <property type="term" value="P:coenzyme A biosynthetic process"/>
    <property type="evidence" value="ECO:0007669"/>
    <property type="project" value="UniProtKB-UniRule"/>
</dbReference>
<dbReference type="GO" id="GO:0015940">
    <property type="term" value="P:pantothenate biosynthetic process"/>
    <property type="evidence" value="ECO:0000318"/>
    <property type="project" value="GO_Central"/>
</dbReference>
<dbReference type="CDD" id="cd06557">
    <property type="entry name" value="KPHMT-like"/>
    <property type="match status" value="1"/>
</dbReference>
<dbReference type="FunFam" id="3.20.20.60:FF:000052">
    <property type="entry name" value="3-methyl-2-oxobutanoate hydroxymethyltransferase"/>
    <property type="match status" value="1"/>
</dbReference>
<dbReference type="Gene3D" id="3.20.20.60">
    <property type="entry name" value="Phosphoenolpyruvate-binding domains"/>
    <property type="match status" value="1"/>
</dbReference>
<dbReference type="HAMAP" id="MF_00156">
    <property type="entry name" value="PanB"/>
    <property type="match status" value="1"/>
</dbReference>
<dbReference type="InterPro" id="IPR003700">
    <property type="entry name" value="Pantoate_hydroxy_MeTrfase"/>
</dbReference>
<dbReference type="InterPro" id="IPR015813">
    <property type="entry name" value="Pyrv/PenolPyrv_kinase-like_dom"/>
</dbReference>
<dbReference type="InterPro" id="IPR040442">
    <property type="entry name" value="Pyrv_kinase-like_dom_sf"/>
</dbReference>
<dbReference type="NCBIfam" id="TIGR00222">
    <property type="entry name" value="panB"/>
    <property type="match status" value="1"/>
</dbReference>
<dbReference type="NCBIfam" id="NF001452">
    <property type="entry name" value="PRK00311.1"/>
    <property type="match status" value="1"/>
</dbReference>
<dbReference type="PANTHER" id="PTHR20881">
    <property type="entry name" value="3-METHYL-2-OXOBUTANOATE HYDROXYMETHYLTRANSFERASE"/>
    <property type="match status" value="1"/>
</dbReference>
<dbReference type="PANTHER" id="PTHR20881:SF0">
    <property type="entry name" value="3-METHYL-2-OXOBUTANOATE HYDROXYMETHYLTRANSFERASE"/>
    <property type="match status" value="1"/>
</dbReference>
<dbReference type="Pfam" id="PF02548">
    <property type="entry name" value="Pantoate_transf"/>
    <property type="match status" value="1"/>
</dbReference>
<dbReference type="PIRSF" id="PIRSF000388">
    <property type="entry name" value="Pantoate_hydroxy_MeTrfase"/>
    <property type="match status" value="1"/>
</dbReference>
<dbReference type="SUPFAM" id="SSF51621">
    <property type="entry name" value="Phosphoenolpyruvate/pyruvate domain"/>
    <property type="match status" value="1"/>
</dbReference>
<comment type="function">
    <text evidence="1">Catalyzes the reversible reaction in which hydroxymethyl group from 5,10-methylenetetrahydrofolate is transferred onto alpha-ketoisovalerate to form ketopantoate.</text>
</comment>
<comment type="catalytic activity">
    <reaction evidence="1">
        <text>3-methyl-2-oxobutanoate + (6R)-5,10-methylene-5,6,7,8-tetrahydrofolate + H2O = 2-dehydropantoate + (6S)-5,6,7,8-tetrahydrofolate</text>
        <dbReference type="Rhea" id="RHEA:11824"/>
        <dbReference type="ChEBI" id="CHEBI:11561"/>
        <dbReference type="ChEBI" id="CHEBI:11851"/>
        <dbReference type="ChEBI" id="CHEBI:15377"/>
        <dbReference type="ChEBI" id="CHEBI:15636"/>
        <dbReference type="ChEBI" id="CHEBI:57453"/>
        <dbReference type="EC" id="2.1.2.11"/>
    </reaction>
</comment>
<comment type="cofactor">
    <cofactor evidence="1">
        <name>Mg(2+)</name>
        <dbReference type="ChEBI" id="CHEBI:18420"/>
    </cofactor>
    <text evidence="1">Binds 1 Mg(2+) ion per subunit.</text>
</comment>
<comment type="pathway">
    <text evidence="1">Cofactor biosynthesis; coenzyme A biosynthesis.</text>
</comment>
<comment type="subunit">
    <text evidence="1">Homodecamer; pentamer of dimers.</text>
</comment>
<comment type="subcellular location">
    <subcellularLocation>
        <location evidence="1">Cytoplasm</location>
    </subcellularLocation>
</comment>
<comment type="similarity">
    <text evidence="1">Belongs to the PanB family.</text>
</comment>
<sequence>MSARRRVTDFVKGKGPYVWVTAYDYPTAKIVDEAGVDGILVGDSLGMVVLGLPNTLGVTLADMIRHTQAVARARPRALVVADMPFMSYETGPRDALRNASKLIKAGADAVKLEGGAEYARIVEKLVKAGIPVMGHIGLNPQRVLALGGFKMVGRTEEQRRKLLDDAKALRDAGAFSLVIEFVPASVAKEITEAVDIPTICIGAGPHCDGQILVLHDIIGLTERPPSFAKRYANVADVIRSAVKQYVNEVKTGQFPSKEHFKE</sequence>
<accession>Q8ZT69</accession>
<keyword id="KW-0173">Coenzyme A biosynthesis</keyword>
<keyword id="KW-0963">Cytoplasm</keyword>
<keyword id="KW-0460">Magnesium</keyword>
<keyword id="KW-0479">Metal-binding</keyword>
<keyword id="KW-1185">Reference proteome</keyword>
<keyword id="KW-0808">Transferase</keyword>
<reference key="1">
    <citation type="journal article" date="2002" name="Proc. Natl. Acad. Sci. U.S.A.">
        <title>Genome sequence of the hyperthermophilic crenarchaeon Pyrobaculum aerophilum.</title>
        <authorList>
            <person name="Fitz-Gibbon S.T."/>
            <person name="Ladner H."/>
            <person name="Kim U.-J."/>
            <person name="Stetter K.O."/>
            <person name="Simon M.I."/>
            <person name="Miller J.H."/>
        </authorList>
    </citation>
    <scope>NUCLEOTIDE SEQUENCE [LARGE SCALE GENOMIC DNA]</scope>
    <source>
        <strain>ATCC 51768 / DSM 7523 / JCM 9630 / CIP 104966 / NBRC 100827 / IM2</strain>
    </source>
</reference>